<reference key="1">
    <citation type="journal article" date="1990" name="Proc. Natl. Acad. Sci. U.S.A.">
        <title>Xenopus Y-box transcription factors: molecular cloning, functional analysis and developmental regulation.</title>
        <authorList>
            <person name="Tafuri S.R."/>
            <person name="Wolffe A.P."/>
        </authorList>
    </citation>
    <scope>NUCLEOTIDE SEQUENCE [MRNA]</scope>
    <scope>FUNCTION</scope>
</reference>
<proteinExistence type="evidence at transcript level"/>
<sequence length="303" mass="34633">MSSEVETQQQQPDALEGKAGQEPAATVGDKKVIATKVLGTVKWFNVRNGYGFINRNDTKEDVFVHQTAIKKNNPRKYLRSVGDGETVEFDVVEGEKGAEAANVTGPEGVPVQGSKYAADRNHYRRYPRRRGPPRNYQQNYQNNESGEKAEENESAPEGDDSNQQRPYHRRRFPPYYSRRPYGRRPQYSNAPVQGEEAEGADSQGTDEQGRPARQNMYRGFRPRFRRGPPRQRQPREEGNEEDKENQGDETQSQPPPQRRYRRNFNYRRRRPENPKSQDGKETKAAETSAENTSTPEAEQGGAE</sequence>
<name>YBOX1_XENLA</name>
<gene>
    <name evidence="3" type="primary">ybx1</name>
    <name evidence="6" type="synonym">frgy1</name>
</gene>
<protein>
    <recommendedName>
        <fullName evidence="3">Y-box-binding protein 1</fullName>
        <shortName evidence="3">YB-1</shortName>
    </recommendedName>
    <alternativeName>
        <fullName>Y-box transcription factor</fullName>
    </alternativeName>
</protein>
<organism>
    <name type="scientific">Xenopus laevis</name>
    <name type="common">African clawed frog</name>
    <dbReference type="NCBI Taxonomy" id="8355"/>
    <lineage>
        <taxon>Eukaryota</taxon>
        <taxon>Metazoa</taxon>
        <taxon>Chordata</taxon>
        <taxon>Craniata</taxon>
        <taxon>Vertebrata</taxon>
        <taxon>Euteleostomi</taxon>
        <taxon>Amphibia</taxon>
        <taxon>Batrachia</taxon>
        <taxon>Anura</taxon>
        <taxon>Pipoidea</taxon>
        <taxon>Pipidae</taxon>
        <taxon>Xenopodinae</taxon>
        <taxon>Xenopus</taxon>
        <taxon>Xenopus</taxon>
    </lineage>
</organism>
<evidence type="ECO:0000250" key="1">
    <source>
        <dbReference type="UniProtKB" id="B5DE31"/>
    </source>
</evidence>
<evidence type="ECO:0000250" key="2">
    <source>
        <dbReference type="UniProtKB" id="P62960"/>
    </source>
</evidence>
<evidence type="ECO:0000250" key="3">
    <source>
        <dbReference type="UniProtKB" id="P67809"/>
    </source>
</evidence>
<evidence type="ECO:0000256" key="4">
    <source>
        <dbReference type="SAM" id="MobiDB-lite"/>
    </source>
</evidence>
<evidence type="ECO:0000269" key="5">
    <source>
    </source>
</evidence>
<evidence type="ECO:0000303" key="6">
    <source>
    </source>
</evidence>
<evidence type="ECO:0000305" key="7"/>
<keyword id="KW-0963">Cytoplasm</keyword>
<keyword id="KW-0238">DNA-binding</keyword>
<keyword id="KW-0507">mRNA processing</keyword>
<keyword id="KW-0508">mRNA splicing</keyword>
<keyword id="KW-0539">Nucleus</keyword>
<keyword id="KW-1185">Reference proteome</keyword>
<keyword id="KW-0678">Repressor</keyword>
<keyword id="KW-0694">RNA-binding</keyword>
<keyword id="KW-0964">Secreted</keyword>
<keyword id="KW-0804">Transcription</keyword>
<keyword id="KW-0805">Transcription regulation</keyword>
<accession>P21573</accession>
<feature type="chain" id="PRO_0000100223" description="Y-box-binding protein 1">
    <location>
        <begin position="1"/>
        <end position="303"/>
    </location>
</feature>
<feature type="domain" description="CSD">
    <location>
        <begin position="39"/>
        <end position="103"/>
    </location>
</feature>
<feature type="region of interest" description="Disordered" evidence="4">
    <location>
        <begin position="1"/>
        <end position="28"/>
    </location>
</feature>
<feature type="region of interest" description="C5-methylcytosine binding" evidence="3">
    <location>
        <begin position="43"/>
        <end position="48"/>
    </location>
</feature>
<feature type="region of interest" description="Disordered" evidence="4">
    <location>
        <begin position="98"/>
        <end position="303"/>
    </location>
</feature>
<feature type="compositionally biased region" description="Polar residues" evidence="4">
    <location>
        <begin position="1"/>
        <end position="12"/>
    </location>
</feature>
<feature type="compositionally biased region" description="Basic residues" evidence="4">
    <location>
        <begin position="122"/>
        <end position="132"/>
    </location>
</feature>
<feature type="compositionally biased region" description="Low complexity" evidence="4">
    <location>
        <begin position="133"/>
        <end position="143"/>
    </location>
</feature>
<feature type="compositionally biased region" description="Low complexity" evidence="4">
    <location>
        <begin position="173"/>
        <end position="187"/>
    </location>
</feature>
<feature type="compositionally biased region" description="Basic residues" evidence="4">
    <location>
        <begin position="220"/>
        <end position="229"/>
    </location>
</feature>
<feature type="compositionally biased region" description="Basic residues" evidence="4">
    <location>
        <begin position="258"/>
        <end position="270"/>
    </location>
</feature>
<feature type="compositionally biased region" description="Basic and acidic residues" evidence="4">
    <location>
        <begin position="271"/>
        <end position="284"/>
    </location>
</feature>
<feature type="site" description="Important for C5-methylcytosine-recognition" evidence="3">
    <location>
        <position position="43"/>
    </location>
</feature>
<comment type="function">
    <text evidence="1 3 5">DNA- and RNA-binding protein involved in various processes, such as translational repression, RNA stabilization, mRNA splicing and transcription regulation (By similarity). Binds preferentially to the 5'-[CU]CUGCG-3' RNA motif and specifically recognizes mRNA transcripts modified by C5-methylcytosine (m5C) (By similarity). Promotes mRNA stabilization: acts by binding to m5C-containing mRNAs and preventing mRNA decay (By similarity). Plays a role in the maternal-to-zygotic transition in early embryo by binding to m5C-containing maternal mRNAs and preventing their degradation (By similarity). Also promotes maternal-to-zygotic transition in oocytes and embryos by promoting translation repression; molecular mechanisms governing translation repression are unknown (By similarity). Plays a key role in RNA composition of extracellular exosomes by defining the sorting of small non-coding RNAs, such as tRNAs, Y RNAs, Vault RNAs and miRNAs (By similarity). Probably sorts RNAs in exosomes by recognizing and binding C5-methylcytosine (m5C)-containing RNAs (By similarity). Acts as a key effector of epidermal progenitors by preventing epidermal progenitor senescence: acts by regulating the translation of a senescence-associated subset of cytokine mRNAs, possibly by binding to m5C-containing mRNAs (By similarity). Also involved in pre-mRNA alternative splicing regulation: binds to splice sites in pre-mRNA and regulates splice site selection (By similarity). Also able to bind DNA and regulate transcription (PubMed:2247479). Binds to promoters that contain a Y-box (5'-CTGATTGGCCAA-3') (PubMed:2247479). Promotes separation of DNA strands that contain mismatches or are modified by cisplatin (By similarity). Has endonucleolytic activity and can introduce nicks or breaks into double-stranded DNA, suggesting a role in DNA repair (By similarity). The secreted form acts as an extracellular mitogen and stimulates cell migration and proliferation (By similarity).</text>
</comment>
<comment type="subcellular location">
    <subcellularLocation>
        <location evidence="3">Cytoplasm</location>
    </subcellularLocation>
    <subcellularLocation>
        <location evidence="3">Nucleus</location>
    </subcellularLocation>
    <subcellularLocation>
        <location evidence="3">Cytoplasmic granule</location>
    </subcellularLocation>
    <subcellularLocation>
        <location evidence="3">Secreted</location>
    </subcellularLocation>
    <subcellularLocation>
        <location evidence="3">Secreted</location>
        <location evidence="3">Extracellular exosome</location>
    </subcellularLocation>
    <subcellularLocation>
        <location evidence="2">Cytoplasm</location>
        <location evidence="2">P-body</location>
    </subcellularLocation>
</comment>
<comment type="domain">
    <text evidence="3">In the CSD domain, Trp-43 specifically recognizes C5-methylcytosine (m5C) modification through its indole ring.</text>
</comment>
<comment type="similarity">
    <text evidence="7">Belongs to the YBX1 family.</text>
</comment>
<dbReference type="EMBL" id="M59453">
    <property type="protein sequence ID" value="AAA49715.1"/>
    <property type="molecule type" value="mRNA"/>
</dbReference>
<dbReference type="PIR" id="A38274">
    <property type="entry name" value="A38274"/>
</dbReference>
<dbReference type="BMRB" id="P21573"/>
<dbReference type="SMR" id="P21573"/>
<dbReference type="AGR" id="Xenbase:XB-GENE-865405"/>
<dbReference type="Xenbase" id="XB-GENE-865405">
    <property type="gene designation" value="ybx1.L"/>
</dbReference>
<dbReference type="OrthoDB" id="6430255at2759"/>
<dbReference type="CD-CODE" id="78E86D56">
    <property type="entry name" value="Mitochondrial cloud"/>
</dbReference>
<dbReference type="Proteomes" id="UP000186698">
    <property type="component" value="Unplaced"/>
</dbReference>
<dbReference type="GO" id="GO:0070062">
    <property type="term" value="C:extracellular exosome"/>
    <property type="evidence" value="ECO:0000250"/>
    <property type="project" value="UniProtKB"/>
</dbReference>
<dbReference type="GO" id="GO:0071204">
    <property type="term" value="C:histone pre-mRNA 3'end processing complex"/>
    <property type="evidence" value="ECO:0000250"/>
    <property type="project" value="UniProtKB"/>
</dbReference>
<dbReference type="GO" id="GO:0005634">
    <property type="term" value="C:nucleus"/>
    <property type="evidence" value="ECO:0000318"/>
    <property type="project" value="GO_Central"/>
</dbReference>
<dbReference type="GO" id="GO:0000932">
    <property type="term" value="C:P-body"/>
    <property type="evidence" value="ECO:0007669"/>
    <property type="project" value="UniProtKB-SubCell"/>
</dbReference>
<dbReference type="GO" id="GO:0062153">
    <property type="term" value="F:C5-methylcytidine-containing RNA reader activity"/>
    <property type="evidence" value="ECO:0000250"/>
    <property type="project" value="UniProtKB"/>
</dbReference>
<dbReference type="GO" id="GO:0003677">
    <property type="term" value="F:DNA binding"/>
    <property type="evidence" value="ECO:0007669"/>
    <property type="project" value="UniProtKB-KW"/>
</dbReference>
<dbReference type="GO" id="GO:0035198">
    <property type="term" value="F:miRNA binding"/>
    <property type="evidence" value="ECO:0000250"/>
    <property type="project" value="UniProtKB"/>
</dbReference>
<dbReference type="GO" id="GO:0003676">
    <property type="term" value="F:nucleic acid binding"/>
    <property type="evidence" value="ECO:0000318"/>
    <property type="project" value="GO_Central"/>
</dbReference>
<dbReference type="GO" id="GO:0003723">
    <property type="term" value="F:RNA binding"/>
    <property type="evidence" value="ECO:0000250"/>
    <property type="project" value="UniProtKB"/>
</dbReference>
<dbReference type="GO" id="GO:0048598">
    <property type="term" value="P:embryonic morphogenesis"/>
    <property type="evidence" value="ECO:0000250"/>
    <property type="project" value="UniProtKB"/>
</dbReference>
<dbReference type="GO" id="GO:0008544">
    <property type="term" value="P:epidermis development"/>
    <property type="evidence" value="ECO:0000250"/>
    <property type="project" value="UniProtKB"/>
</dbReference>
<dbReference type="GO" id="GO:1990428">
    <property type="term" value="P:miRNA transport"/>
    <property type="evidence" value="ECO:0000250"/>
    <property type="project" value="UniProtKB"/>
</dbReference>
<dbReference type="GO" id="GO:0006397">
    <property type="term" value="P:mRNA processing"/>
    <property type="evidence" value="ECO:0007669"/>
    <property type="project" value="UniProtKB-KW"/>
</dbReference>
<dbReference type="GO" id="GO:0048255">
    <property type="term" value="P:mRNA stabilization"/>
    <property type="evidence" value="ECO:0000250"/>
    <property type="project" value="UniProtKB"/>
</dbReference>
<dbReference type="GO" id="GO:2000773">
    <property type="term" value="P:negative regulation of cellular senescence"/>
    <property type="evidence" value="ECO:0000250"/>
    <property type="project" value="UniProtKB"/>
</dbReference>
<dbReference type="GO" id="GO:0017148">
    <property type="term" value="P:negative regulation of translation"/>
    <property type="evidence" value="ECO:0000250"/>
    <property type="project" value="UniProtKB"/>
</dbReference>
<dbReference type="GO" id="GO:0010468">
    <property type="term" value="P:regulation of gene expression"/>
    <property type="evidence" value="ECO:0000318"/>
    <property type="project" value="GO_Central"/>
</dbReference>
<dbReference type="GO" id="GO:0008380">
    <property type="term" value="P:RNA splicing"/>
    <property type="evidence" value="ECO:0007669"/>
    <property type="project" value="UniProtKB-KW"/>
</dbReference>
<dbReference type="GO" id="GO:0050658">
    <property type="term" value="P:RNA transport"/>
    <property type="evidence" value="ECO:0000250"/>
    <property type="project" value="UniProtKB"/>
</dbReference>
<dbReference type="GO" id="GO:0051031">
    <property type="term" value="P:tRNA transport"/>
    <property type="evidence" value="ECO:0000250"/>
    <property type="project" value="UniProtKB"/>
</dbReference>
<dbReference type="CDD" id="cd04458">
    <property type="entry name" value="CSP_CDS"/>
    <property type="match status" value="1"/>
</dbReference>
<dbReference type="FunFam" id="2.40.50.140:FF:000054">
    <property type="entry name" value="Nuclease-sensitive element-binding protein 1"/>
    <property type="match status" value="1"/>
</dbReference>
<dbReference type="Gene3D" id="2.40.50.140">
    <property type="entry name" value="Nucleic acid-binding proteins"/>
    <property type="match status" value="1"/>
</dbReference>
<dbReference type="InterPro" id="IPR050181">
    <property type="entry name" value="Cold_shock_domain"/>
</dbReference>
<dbReference type="InterPro" id="IPR011129">
    <property type="entry name" value="CSD"/>
</dbReference>
<dbReference type="InterPro" id="IPR019844">
    <property type="entry name" value="CSD_CS"/>
</dbReference>
<dbReference type="InterPro" id="IPR002059">
    <property type="entry name" value="CSP_DNA-bd"/>
</dbReference>
<dbReference type="InterPro" id="IPR012340">
    <property type="entry name" value="NA-bd_OB-fold"/>
</dbReference>
<dbReference type="PANTHER" id="PTHR11544">
    <property type="entry name" value="COLD SHOCK DOMAIN CONTAINING PROTEINS"/>
    <property type="match status" value="1"/>
</dbReference>
<dbReference type="Pfam" id="PF00313">
    <property type="entry name" value="CSD"/>
    <property type="match status" value="1"/>
</dbReference>
<dbReference type="PRINTS" id="PR00050">
    <property type="entry name" value="COLDSHOCK"/>
</dbReference>
<dbReference type="SMART" id="SM00357">
    <property type="entry name" value="CSP"/>
    <property type="match status" value="1"/>
</dbReference>
<dbReference type="SUPFAM" id="SSF50249">
    <property type="entry name" value="Nucleic acid-binding proteins"/>
    <property type="match status" value="1"/>
</dbReference>
<dbReference type="PROSITE" id="PS00352">
    <property type="entry name" value="CSD_1"/>
    <property type="match status" value="1"/>
</dbReference>
<dbReference type="PROSITE" id="PS51857">
    <property type="entry name" value="CSD_2"/>
    <property type="match status" value="1"/>
</dbReference>